<accession>Q6APY7</accession>
<evidence type="ECO:0000255" key="1">
    <source>
        <dbReference type="HAMAP-Rule" id="MF_00379"/>
    </source>
</evidence>
<evidence type="ECO:0000305" key="2"/>
<gene>
    <name evidence="1" type="primary">mnmE</name>
    <name evidence="1" type="synonym">trmE</name>
    <name type="ordered locus">DP0857</name>
</gene>
<feature type="chain" id="PRO_0000345772" description="tRNA modification GTPase MnmE">
    <location>
        <begin position="1"/>
        <end position="467"/>
    </location>
</feature>
<feature type="domain" description="TrmE-type G">
    <location>
        <begin position="225"/>
        <end position="387"/>
    </location>
</feature>
<feature type="binding site" evidence="1">
    <location>
        <position position="27"/>
    </location>
    <ligand>
        <name>(6S)-5-formyl-5,6,7,8-tetrahydrofolate</name>
        <dbReference type="ChEBI" id="CHEBI:57457"/>
    </ligand>
</feature>
<feature type="binding site" evidence="1">
    <location>
        <position position="89"/>
    </location>
    <ligand>
        <name>(6S)-5-formyl-5,6,7,8-tetrahydrofolate</name>
        <dbReference type="ChEBI" id="CHEBI:57457"/>
    </ligand>
</feature>
<feature type="binding site" evidence="1">
    <location>
        <position position="128"/>
    </location>
    <ligand>
        <name>(6S)-5-formyl-5,6,7,8-tetrahydrofolate</name>
        <dbReference type="ChEBI" id="CHEBI:57457"/>
    </ligand>
</feature>
<feature type="binding site" evidence="1">
    <location>
        <begin position="235"/>
        <end position="240"/>
    </location>
    <ligand>
        <name>GTP</name>
        <dbReference type="ChEBI" id="CHEBI:37565"/>
    </ligand>
</feature>
<feature type="binding site" evidence="1">
    <location>
        <position position="235"/>
    </location>
    <ligand>
        <name>K(+)</name>
        <dbReference type="ChEBI" id="CHEBI:29103"/>
    </ligand>
</feature>
<feature type="binding site" evidence="1">
    <location>
        <position position="239"/>
    </location>
    <ligand>
        <name>Mg(2+)</name>
        <dbReference type="ChEBI" id="CHEBI:18420"/>
    </ligand>
</feature>
<feature type="binding site" evidence="1">
    <location>
        <begin position="254"/>
        <end position="260"/>
    </location>
    <ligand>
        <name>GTP</name>
        <dbReference type="ChEBI" id="CHEBI:37565"/>
    </ligand>
</feature>
<feature type="binding site" evidence="1">
    <location>
        <position position="254"/>
    </location>
    <ligand>
        <name>K(+)</name>
        <dbReference type="ChEBI" id="CHEBI:29103"/>
    </ligand>
</feature>
<feature type="binding site" evidence="1">
    <location>
        <position position="256"/>
    </location>
    <ligand>
        <name>K(+)</name>
        <dbReference type="ChEBI" id="CHEBI:29103"/>
    </ligand>
</feature>
<feature type="binding site" evidence="1">
    <location>
        <position position="259"/>
    </location>
    <ligand>
        <name>K(+)</name>
        <dbReference type="ChEBI" id="CHEBI:29103"/>
    </ligand>
</feature>
<feature type="binding site" evidence="1">
    <location>
        <position position="260"/>
    </location>
    <ligand>
        <name>Mg(2+)</name>
        <dbReference type="ChEBI" id="CHEBI:18420"/>
    </ligand>
</feature>
<feature type="binding site" evidence="1">
    <location>
        <begin position="279"/>
        <end position="282"/>
    </location>
    <ligand>
        <name>GTP</name>
        <dbReference type="ChEBI" id="CHEBI:37565"/>
    </ligand>
</feature>
<feature type="binding site" evidence="1">
    <location>
        <begin position="368"/>
        <end position="370"/>
    </location>
    <ligand>
        <name>GTP</name>
        <dbReference type="ChEBI" id="CHEBI:37565"/>
    </ligand>
</feature>
<feature type="binding site" evidence="1">
    <location>
        <position position="467"/>
    </location>
    <ligand>
        <name>(6S)-5-formyl-5,6,7,8-tetrahydrofolate</name>
        <dbReference type="ChEBI" id="CHEBI:57457"/>
    </ligand>
</feature>
<protein>
    <recommendedName>
        <fullName evidence="1">tRNA modification GTPase MnmE</fullName>
        <ecNumber evidence="1">3.6.-.-</ecNumber>
    </recommendedName>
</protein>
<keyword id="KW-0963">Cytoplasm</keyword>
<keyword id="KW-0342">GTP-binding</keyword>
<keyword id="KW-0378">Hydrolase</keyword>
<keyword id="KW-0460">Magnesium</keyword>
<keyword id="KW-0479">Metal-binding</keyword>
<keyword id="KW-0547">Nucleotide-binding</keyword>
<keyword id="KW-0630">Potassium</keyword>
<keyword id="KW-1185">Reference proteome</keyword>
<keyword id="KW-0819">tRNA processing</keyword>
<sequence length="467" mass="50998">MAISYADNETIAAISTPMGTGGIGVIRISGKESLTILQTIFRPHNDSCSYRSHQMYYGQIVAADGHQLDEVLVVYMRAPKTYTCEDIVEIHCHGNFLVLQNVLELVIEKGASLAEPGEFTKRAFFNGRIDLTKAEAVIDVLSAKTRKGVDVAQEQLAGSLYRRIEPIRNALVHMRALFEVAIDFPDQSHDIVDYEQIDLQLKTEVIAPVKELLAGVDRGRIYRQGISMVIAGRPNVGKSSLLNAVLQEERALVTSIAGTTRDSIEEMVDILGMPVRIVDTAGIRRQAGEVEALGIQRAKDLINSADLVLFMVDGSRQLDQSDLELYEDIAHKPMIAVINKLDLLAEDGTAAAALLDFVPASVPRLAISAREGEGLEALKQAIFTVVTGSDTPWDEEGCAPNLRHKKSLEATLIAAERMVDDLAQGMGSSDLLSIDMQECLDQLGDIIGITTTDDVFDVIFSEFCLGK</sequence>
<organism>
    <name type="scientific">Desulfotalea psychrophila (strain LSv54 / DSM 12343)</name>
    <dbReference type="NCBI Taxonomy" id="177439"/>
    <lineage>
        <taxon>Bacteria</taxon>
        <taxon>Pseudomonadati</taxon>
        <taxon>Thermodesulfobacteriota</taxon>
        <taxon>Desulfobulbia</taxon>
        <taxon>Desulfobulbales</taxon>
        <taxon>Desulfocapsaceae</taxon>
        <taxon>Desulfotalea</taxon>
    </lineage>
</organism>
<dbReference type="EC" id="3.6.-.-" evidence="1"/>
<dbReference type="EMBL" id="CR522870">
    <property type="protein sequence ID" value="CAG35586.1"/>
    <property type="status" value="ALT_INIT"/>
    <property type="molecule type" value="Genomic_DNA"/>
</dbReference>
<dbReference type="SMR" id="Q6APY7"/>
<dbReference type="STRING" id="177439.DP0857"/>
<dbReference type="KEGG" id="dps:DP0857"/>
<dbReference type="eggNOG" id="COG0486">
    <property type="taxonomic scope" value="Bacteria"/>
</dbReference>
<dbReference type="HOGENOM" id="CLU_019624_4_1_7"/>
<dbReference type="OrthoDB" id="9805918at2"/>
<dbReference type="Proteomes" id="UP000000602">
    <property type="component" value="Chromosome"/>
</dbReference>
<dbReference type="GO" id="GO:0005829">
    <property type="term" value="C:cytosol"/>
    <property type="evidence" value="ECO:0007669"/>
    <property type="project" value="TreeGrafter"/>
</dbReference>
<dbReference type="GO" id="GO:0005525">
    <property type="term" value="F:GTP binding"/>
    <property type="evidence" value="ECO:0007669"/>
    <property type="project" value="UniProtKB-UniRule"/>
</dbReference>
<dbReference type="GO" id="GO:0003924">
    <property type="term" value="F:GTPase activity"/>
    <property type="evidence" value="ECO:0007669"/>
    <property type="project" value="UniProtKB-UniRule"/>
</dbReference>
<dbReference type="GO" id="GO:0046872">
    <property type="term" value="F:metal ion binding"/>
    <property type="evidence" value="ECO:0007669"/>
    <property type="project" value="UniProtKB-KW"/>
</dbReference>
<dbReference type="GO" id="GO:0030488">
    <property type="term" value="P:tRNA methylation"/>
    <property type="evidence" value="ECO:0007669"/>
    <property type="project" value="TreeGrafter"/>
</dbReference>
<dbReference type="GO" id="GO:0002098">
    <property type="term" value="P:tRNA wobble uridine modification"/>
    <property type="evidence" value="ECO:0007669"/>
    <property type="project" value="TreeGrafter"/>
</dbReference>
<dbReference type="CDD" id="cd04164">
    <property type="entry name" value="trmE"/>
    <property type="match status" value="1"/>
</dbReference>
<dbReference type="CDD" id="cd14858">
    <property type="entry name" value="TrmE_N"/>
    <property type="match status" value="1"/>
</dbReference>
<dbReference type="FunFam" id="3.30.1360.120:FF:000003">
    <property type="entry name" value="tRNA modification GTPase MnmE"/>
    <property type="match status" value="1"/>
</dbReference>
<dbReference type="FunFam" id="3.40.50.300:FF:001376">
    <property type="entry name" value="tRNA modification GTPase MnmE"/>
    <property type="match status" value="1"/>
</dbReference>
<dbReference type="Gene3D" id="3.40.50.300">
    <property type="entry name" value="P-loop containing nucleotide triphosphate hydrolases"/>
    <property type="match status" value="1"/>
</dbReference>
<dbReference type="Gene3D" id="3.30.1360.120">
    <property type="entry name" value="Probable tRNA modification gtpase trme, domain 1"/>
    <property type="match status" value="1"/>
</dbReference>
<dbReference type="Gene3D" id="1.20.120.430">
    <property type="entry name" value="tRNA modification GTPase MnmE domain 2"/>
    <property type="match status" value="1"/>
</dbReference>
<dbReference type="HAMAP" id="MF_00379">
    <property type="entry name" value="GTPase_MnmE"/>
    <property type="match status" value="1"/>
</dbReference>
<dbReference type="InterPro" id="IPR031168">
    <property type="entry name" value="G_TrmE"/>
</dbReference>
<dbReference type="InterPro" id="IPR006073">
    <property type="entry name" value="GTP-bd"/>
</dbReference>
<dbReference type="InterPro" id="IPR018948">
    <property type="entry name" value="GTP-bd_TrmE_N"/>
</dbReference>
<dbReference type="InterPro" id="IPR004520">
    <property type="entry name" value="GTPase_MnmE"/>
</dbReference>
<dbReference type="InterPro" id="IPR027368">
    <property type="entry name" value="MnmE_dom2"/>
</dbReference>
<dbReference type="InterPro" id="IPR025867">
    <property type="entry name" value="MnmE_helical"/>
</dbReference>
<dbReference type="InterPro" id="IPR027417">
    <property type="entry name" value="P-loop_NTPase"/>
</dbReference>
<dbReference type="InterPro" id="IPR005225">
    <property type="entry name" value="Small_GTP-bd"/>
</dbReference>
<dbReference type="InterPro" id="IPR027266">
    <property type="entry name" value="TrmE/GcvT_dom1"/>
</dbReference>
<dbReference type="NCBIfam" id="TIGR00450">
    <property type="entry name" value="mnmE_trmE_thdF"/>
    <property type="match status" value="1"/>
</dbReference>
<dbReference type="NCBIfam" id="TIGR00231">
    <property type="entry name" value="small_GTP"/>
    <property type="match status" value="1"/>
</dbReference>
<dbReference type="PANTHER" id="PTHR42714">
    <property type="entry name" value="TRNA MODIFICATION GTPASE GTPBP3"/>
    <property type="match status" value="1"/>
</dbReference>
<dbReference type="PANTHER" id="PTHR42714:SF2">
    <property type="entry name" value="TRNA MODIFICATION GTPASE GTPBP3, MITOCHONDRIAL"/>
    <property type="match status" value="1"/>
</dbReference>
<dbReference type="Pfam" id="PF01926">
    <property type="entry name" value="MMR_HSR1"/>
    <property type="match status" value="1"/>
</dbReference>
<dbReference type="Pfam" id="PF12631">
    <property type="entry name" value="MnmE_helical"/>
    <property type="match status" value="1"/>
</dbReference>
<dbReference type="Pfam" id="PF10396">
    <property type="entry name" value="TrmE_N"/>
    <property type="match status" value="1"/>
</dbReference>
<dbReference type="SUPFAM" id="SSF52540">
    <property type="entry name" value="P-loop containing nucleoside triphosphate hydrolases"/>
    <property type="match status" value="1"/>
</dbReference>
<dbReference type="PROSITE" id="PS51709">
    <property type="entry name" value="G_TRME"/>
    <property type="match status" value="1"/>
</dbReference>
<name>MNME_DESPS</name>
<reference key="1">
    <citation type="journal article" date="2004" name="Environ. Microbiol.">
        <title>The genome of Desulfotalea psychrophila, a sulfate-reducing bacterium from permanently cold Arctic sediments.</title>
        <authorList>
            <person name="Rabus R."/>
            <person name="Ruepp A."/>
            <person name="Frickey T."/>
            <person name="Rattei T."/>
            <person name="Fartmann B."/>
            <person name="Stark M."/>
            <person name="Bauer M."/>
            <person name="Zibat A."/>
            <person name="Lombardot T."/>
            <person name="Becker I."/>
            <person name="Amann J."/>
            <person name="Gellner K."/>
            <person name="Teeling H."/>
            <person name="Leuschner W.D."/>
            <person name="Gloeckner F.-O."/>
            <person name="Lupas A.N."/>
            <person name="Amann R."/>
            <person name="Klenk H.-P."/>
        </authorList>
    </citation>
    <scope>NUCLEOTIDE SEQUENCE [LARGE SCALE GENOMIC DNA]</scope>
    <source>
        <strain>DSM 12343 / LSv54</strain>
    </source>
</reference>
<comment type="function">
    <text evidence="1">Exhibits a very high intrinsic GTPase hydrolysis rate. Involved in the addition of a carboxymethylaminomethyl (cmnm) group at the wobble position (U34) of certain tRNAs, forming tRNA-cmnm(5)s(2)U34.</text>
</comment>
<comment type="cofactor">
    <cofactor evidence="1">
        <name>K(+)</name>
        <dbReference type="ChEBI" id="CHEBI:29103"/>
    </cofactor>
    <text evidence="1">Binds 1 potassium ion per subunit.</text>
</comment>
<comment type="subunit">
    <text evidence="1">Homodimer. Heterotetramer of two MnmE and two MnmG subunits.</text>
</comment>
<comment type="subcellular location">
    <subcellularLocation>
        <location evidence="1">Cytoplasm</location>
    </subcellularLocation>
</comment>
<comment type="similarity">
    <text evidence="1">Belongs to the TRAFAC class TrmE-Era-EngA-EngB-Septin-like GTPase superfamily. TrmE GTPase family.</text>
</comment>
<comment type="sequence caution" evidence="2">
    <conflict type="erroneous initiation">
        <sequence resource="EMBL-CDS" id="CAG35586"/>
    </conflict>
</comment>
<proteinExistence type="inferred from homology"/>